<evidence type="ECO:0000255" key="1">
    <source>
        <dbReference type="HAMAP-Rule" id="MF_00313"/>
    </source>
</evidence>
<protein>
    <recommendedName>
        <fullName evidence="1">Glutaminase</fullName>
        <ecNumber evidence="1">3.5.1.2</ecNumber>
    </recommendedName>
</protein>
<gene>
    <name evidence="1" type="primary">glsA</name>
    <name type="ordered locus">SeD_A1810</name>
</gene>
<accession>B5FHM8</accession>
<proteinExistence type="inferred from homology"/>
<reference key="1">
    <citation type="journal article" date="2011" name="J. Bacteriol.">
        <title>Comparative genomics of 28 Salmonella enterica isolates: evidence for CRISPR-mediated adaptive sublineage evolution.</title>
        <authorList>
            <person name="Fricke W.F."/>
            <person name="Mammel M.K."/>
            <person name="McDermott P.F."/>
            <person name="Tartera C."/>
            <person name="White D.G."/>
            <person name="Leclerc J.E."/>
            <person name="Ravel J."/>
            <person name="Cebula T.A."/>
        </authorList>
    </citation>
    <scope>NUCLEOTIDE SEQUENCE [LARGE SCALE GENOMIC DNA]</scope>
    <source>
        <strain>CT_02021853</strain>
    </source>
</reference>
<organism>
    <name type="scientific">Salmonella dublin (strain CT_02021853)</name>
    <dbReference type="NCBI Taxonomy" id="439851"/>
    <lineage>
        <taxon>Bacteria</taxon>
        <taxon>Pseudomonadati</taxon>
        <taxon>Pseudomonadota</taxon>
        <taxon>Gammaproteobacteria</taxon>
        <taxon>Enterobacterales</taxon>
        <taxon>Enterobacteriaceae</taxon>
        <taxon>Salmonella</taxon>
    </lineage>
</organism>
<keyword id="KW-0378">Hydrolase</keyword>
<dbReference type="EC" id="3.5.1.2" evidence="1"/>
<dbReference type="EMBL" id="CP001144">
    <property type="protein sequence ID" value="ACH73720.1"/>
    <property type="molecule type" value="Genomic_DNA"/>
</dbReference>
<dbReference type="SMR" id="B5FHM8"/>
<dbReference type="KEGG" id="sed:SeD_A1810"/>
<dbReference type="HOGENOM" id="CLU_027932_1_1_6"/>
<dbReference type="Proteomes" id="UP000008322">
    <property type="component" value="Chromosome"/>
</dbReference>
<dbReference type="GO" id="GO:0004359">
    <property type="term" value="F:glutaminase activity"/>
    <property type="evidence" value="ECO:0007669"/>
    <property type="project" value="UniProtKB-UniRule"/>
</dbReference>
<dbReference type="GO" id="GO:0006537">
    <property type="term" value="P:glutamate biosynthetic process"/>
    <property type="evidence" value="ECO:0007669"/>
    <property type="project" value="TreeGrafter"/>
</dbReference>
<dbReference type="GO" id="GO:0006543">
    <property type="term" value="P:glutamine catabolic process"/>
    <property type="evidence" value="ECO:0007669"/>
    <property type="project" value="TreeGrafter"/>
</dbReference>
<dbReference type="FunFam" id="3.40.710.10:FF:000005">
    <property type="entry name" value="Glutaminase"/>
    <property type="match status" value="1"/>
</dbReference>
<dbReference type="Gene3D" id="3.40.710.10">
    <property type="entry name" value="DD-peptidase/beta-lactamase superfamily"/>
    <property type="match status" value="1"/>
</dbReference>
<dbReference type="HAMAP" id="MF_00313">
    <property type="entry name" value="Glutaminase"/>
    <property type="match status" value="1"/>
</dbReference>
<dbReference type="InterPro" id="IPR012338">
    <property type="entry name" value="Beta-lactam/transpept-like"/>
</dbReference>
<dbReference type="InterPro" id="IPR015868">
    <property type="entry name" value="Glutaminase"/>
</dbReference>
<dbReference type="NCBIfam" id="TIGR03814">
    <property type="entry name" value="Gln_ase"/>
    <property type="match status" value="1"/>
</dbReference>
<dbReference type="NCBIfam" id="NF002132">
    <property type="entry name" value="PRK00971.1-1"/>
    <property type="match status" value="1"/>
</dbReference>
<dbReference type="NCBIfam" id="NF002133">
    <property type="entry name" value="PRK00971.1-2"/>
    <property type="match status" value="1"/>
</dbReference>
<dbReference type="PANTHER" id="PTHR12544">
    <property type="entry name" value="GLUTAMINASE"/>
    <property type="match status" value="1"/>
</dbReference>
<dbReference type="PANTHER" id="PTHR12544:SF29">
    <property type="entry name" value="GLUTAMINASE"/>
    <property type="match status" value="1"/>
</dbReference>
<dbReference type="Pfam" id="PF04960">
    <property type="entry name" value="Glutaminase"/>
    <property type="match status" value="1"/>
</dbReference>
<dbReference type="SUPFAM" id="SSF56601">
    <property type="entry name" value="beta-lactamase/transpeptidase-like"/>
    <property type="match status" value="1"/>
</dbReference>
<comment type="catalytic activity">
    <reaction evidence="1">
        <text>L-glutamine + H2O = L-glutamate + NH4(+)</text>
        <dbReference type="Rhea" id="RHEA:15889"/>
        <dbReference type="ChEBI" id="CHEBI:15377"/>
        <dbReference type="ChEBI" id="CHEBI:28938"/>
        <dbReference type="ChEBI" id="CHEBI:29985"/>
        <dbReference type="ChEBI" id="CHEBI:58359"/>
        <dbReference type="EC" id="3.5.1.2"/>
    </reaction>
</comment>
<comment type="subunit">
    <text evidence="1">Homotetramer.</text>
</comment>
<comment type="similarity">
    <text evidence="1">Belongs to the glutaminase family.</text>
</comment>
<sequence length="308" mass="33613">MAWAMDNAILETILQRVRPLIGQGKVAAYIPALASVEGSKLGIAICTVDGQHYQAGDAHERFSIQSISKVLSLVVTMRHYPEEEIWQRVGKDPSGSPFNSLVQLEMEQGIPRNPFINAGALVVCDMLQGRLSAPRQRMLEVVRALCGVSDITYDATVARSEFEHSARNAAIAWLMKSFGNFHHDVPTVLQNYFHYCALKMSCMELARTFVFLANQGEAFHLDEPVVTPMQARQINALMATSGMYQNAGEFAWRVGLPAKSGVGGGIVAIVPHEMAIAVWSPELDPAGNSLAGIAALEQLTQTLGRSVY</sequence>
<name>GLSA_SALDC</name>
<feature type="chain" id="PRO_1000115705" description="Glutaminase">
    <location>
        <begin position="1"/>
        <end position="308"/>
    </location>
</feature>
<feature type="binding site" evidence="1">
    <location>
        <position position="66"/>
    </location>
    <ligand>
        <name>substrate</name>
    </ligand>
</feature>
<feature type="binding site" evidence="1">
    <location>
        <position position="117"/>
    </location>
    <ligand>
        <name>substrate</name>
    </ligand>
</feature>
<feature type="binding site" evidence="1">
    <location>
        <position position="161"/>
    </location>
    <ligand>
        <name>substrate</name>
    </ligand>
</feature>
<feature type="binding site" evidence="1">
    <location>
        <position position="168"/>
    </location>
    <ligand>
        <name>substrate</name>
    </ligand>
</feature>
<feature type="binding site" evidence="1">
    <location>
        <position position="192"/>
    </location>
    <ligand>
        <name>substrate</name>
    </ligand>
</feature>
<feature type="binding site" evidence="1">
    <location>
        <position position="244"/>
    </location>
    <ligand>
        <name>substrate</name>
    </ligand>
</feature>
<feature type="binding site" evidence="1">
    <location>
        <position position="262"/>
    </location>
    <ligand>
        <name>substrate</name>
    </ligand>
</feature>